<keyword id="KW-0131">Cell cycle</keyword>
<keyword id="KW-0132">Cell division</keyword>
<keyword id="KW-0195">Cyclin</keyword>
<keyword id="KW-0498">Mitosis</keyword>
<gene>
    <name type="primary">ccnb1</name>
</gene>
<evidence type="ECO:0000250" key="1"/>
<evidence type="ECO:0000256" key="2">
    <source>
        <dbReference type="SAM" id="MobiDB-lite"/>
    </source>
</evidence>
<evidence type="ECO:0000305" key="3"/>
<name>CCNB1_ORYJA</name>
<feature type="chain" id="PRO_0000080357" description="G2/mitotic-specific cyclin-B1">
    <location>
        <begin position="1"/>
        <end position="401"/>
    </location>
</feature>
<feature type="region of interest" description="Disordered" evidence="2">
    <location>
        <begin position="1"/>
        <end position="30"/>
    </location>
</feature>
<feature type="region of interest" description="Disordered" evidence="2">
    <location>
        <begin position="84"/>
        <end position="103"/>
    </location>
</feature>
<feature type="compositionally biased region" description="Polar residues" evidence="2">
    <location>
        <begin position="9"/>
        <end position="26"/>
    </location>
</feature>
<comment type="function">
    <text evidence="1">Essential for the control of the cell cycle at the G2/M (mitosis) transition.</text>
</comment>
<comment type="subunit">
    <text evidence="1">Interacts with the CDK1 protein kinase to form a serine/threonine kinase holoenzyme complex also known as maturation promoting factor (MPF). The cyclin subunit imparts substrate specificity to the complex (By similarity).</text>
</comment>
<comment type="developmental stage">
    <text>Accumulates steadily during G2 and is abruptly destroyed at mitosis.</text>
</comment>
<comment type="similarity">
    <text evidence="3">Belongs to the cyclin family. Cyclin AB subfamily.</text>
</comment>
<sequence>MALRVTRNRLASTRAEQGGKTCSVSGPTLKPRAALGEIGNVAANKDVTKKNVKMEAAKKTRITAKAEKIEQPKATVVPVKPEPKVQVPAQPEPASPTPMETSGCEPADLCQAFSDVILNTAIRDVDADDYDNPMLCSEYVKDIYKYLRQLEVEQSVKPNYLQGQEVTGNMRAILIDWLVQVNLKFRLLQETMYMTVGIIDRFLQDHPVPKKQLQLVGVTAMFLASKYEEMYPPEISDFAYVTDRAYTTAQIRDMEMTILRVLKFQLGRPLPLQFLRRASKIYEVTAEQHTLAKYLLELSIVDYDMAHFPPSTVASAALGLTLKVLDAGEWDVTLQHYMDYTAHTLTPVMAHIAKNVVKVNDGLTKHMAIKGKYSTSKQMRVATIAQLKSSLVKDLAKQLSQ</sequence>
<protein>
    <recommendedName>
        <fullName>G2/mitotic-specific cyclin-B1</fullName>
    </recommendedName>
</protein>
<accession>Q9DGA0</accession>
<dbReference type="EMBL" id="AB050463">
    <property type="protein sequence ID" value="BAB17221.2"/>
    <property type="molecule type" value="mRNA"/>
</dbReference>
<dbReference type="SMR" id="Q9DGA0"/>
<dbReference type="GO" id="GO:0016538">
    <property type="term" value="F:cyclin-dependent protein serine/threonine kinase regulator activity"/>
    <property type="evidence" value="ECO:0007669"/>
    <property type="project" value="InterPro"/>
</dbReference>
<dbReference type="GO" id="GO:0051301">
    <property type="term" value="P:cell division"/>
    <property type="evidence" value="ECO:0007669"/>
    <property type="project" value="UniProtKB-KW"/>
</dbReference>
<dbReference type="GO" id="GO:0044772">
    <property type="term" value="P:mitotic cell cycle phase transition"/>
    <property type="evidence" value="ECO:0007669"/>
    <property type="project" value="InterPro"/>
</dbReference>
<dbReference type="CDD" id="cd20565">
    <property type="entry name" value="CYCLIN_CCNB1_rpt1"/>
    <property type="match status" value="1"/>
</dbReference>
<dbReference type="FunFam" id="1.10.472.10:FF:000198">
    <property type="entry name" value="G2/mitotic-specific cyclin-B1"/>
    <property type="match status" value="1"/>
</dbReference>
<dbReference type="Gene3D" id="1.10.472.10">
    <property type="entry name" value="Cyclin-like"/>
    <property type="match status" value="2"/>
</dbReference>
<dbReference type="InterPro" id="IPR048026">
    <property type="entry name" value="CCNB1_first_cyclin-box"/>
</dbReference>
<dbReference type="InterPro" id="IPR039361">
    <property type="entry name" value="Cyclin"/>
</dbReference>
<dbReference type="InterPro" id="IPR013763">
    <property type="entry name" value="Cyclin-like_dom"/>
</dbReference>
<dbReference type="InterPro" id="IPR036915">
    <property type="entry name" value="Cyclin-like_sf"/>
</dbReference>
<dbReference type="InterPro" id="IPR046965">
    <property type="entry name" value="Cyclin_A/B-like"/>
</dbReference>
<dbReference type="InterPro" id="IPR004367">
    <property type="entry name" value="Cyclin_C-dom"/>
</dbReference>
<dbReference type="InterPro" id="IPR006671">
    <property type="entry name" value="Cyclin_N"/>
</dbReference>
<dbReference type="InterPro" id="IPR048258">
    <property type="entry name" value="Cyclins_cyclin-box"/>
</dbReference>
<dbReference type="PANTHER" id="PTHR10177">
    <property type="entry name" value="CYCLINS"/>
    <property type="match status" value="1"/>
</dbReference>
<dbReference type="Pfam" id="PF02984">
    <property type="entry name" value="Cyclin_C"/>
    <property type="match status" value="1"/>
</dbReference>
<dbReference type="Pfam" id="PF00134">
    <property type="entry name" value="Cyclin_N"/>
    <property type="match status" value="1"/>
</dbReference>
<dbReference type="PIRSF" id="PIRSF001771">
    <property type="entry name" value="Cyclin_A_B_D_E"/>
    <property type="match status" value="1"/>
</dbReference>
<dbReference type="SMART" id="SM00385">
    <property type="entry name" value="CYCLIN"/>
    <property type="match status" value="2"/>
</dbReference>
<dbReference type="SMART" id="SM01332">
    <property type="entry name" value="Cyclin_C"/>
    <property type="match status" value="1"/>
</dbReference>
<dbReference type="SUPFAM" id="SSF47954">
    <property type="entry name" value="Cyclin-like"/>
    <property type="match status" value="2"/>
</dbReference>
<dbReference type="PROSITE" id="PS00292">
    <property type="entry name" value="CYCLINS"/>
    <property type="match status" value="1"/>
</dbReference>
<reference key="1">
    <citation type="submission" date="2000-10" db="EMBL/GenBank/DDBJ databases">
        <title>cDNA cloning of Cdc2 and cyclin B in medaka species.</title>
        <authorList>
            <person name="Yamashita M."/>
            <person name="Mita K."/>
        </authorList>
    </citation>
    <scope>NUCLEOTIDE SEQUENCE [MRNA]</scope>
    <source>
        <tissue>Ovary</tissue>
    </source>
</reference>
<proteinExistence type="evidence at transcript level"/>
<organism>
    <name type="scientific">Oryzias javanicus</name>
    <name type="common">Javanese ricefish</name>
    <name type="synonym">Aplocheilus javanicus</name>
    <dbReference type="NCBI Taxonomy" id="123683"/>
    <lineage>
        <taxon>Eukaryota</taxon>
        <taxon>Metazoa</taxon>
        <taxon>Chordata</taxon>
        <taxon>Craniata</taxon>
        <taxon>Vertebrata</taxon>
        <taxon>Euteleostomi</taxon>
        <taxon>Actinopterygii</taxon>
        <taxon>Neopterygii</taxon>
        <taxon>Teleostei</taxon>
        <taxon>Neoteleostei</taxon>
        <taxon>Acanthomorphata</taxon>
        <taxon>Ovalentaria</taxon>
        <taxon>Atherinomorphae</taxon>
        <taxon>Beloniformes</taxon>
        <taxon>Adrianichthyidae</taxon>
        <taxon>Oryziinae</taxon>
        <taxon>Oryzias</taxon>
    </lineage>
</organism>